<dbReference type="EMBL" id="CP001097">
    <property type="protein sequence ID" value="ACD90455.1"/>
    <property type="molecule type" value="Genomic_DNA"/>
</dbReference>
<dbReference type="RefSeq" id="WP_012466332.1">
    <property type="nucleotide sequence ID" value="NC_010803.1"/>
</dbReference>
<dbReference type="SMR" id="B3ED30"/>
<dbReference type="STRING" id="290315.Clim_1395"/>
<dbReference type="KEGG" id="cli:Clim_1395"/>
<dbReference type="eggNOG" id="COG0335">
    <property type="taxonomic scope" value="Bacteria"/>
</dbReference>
<dbReference type="HOGENOM" id="CLU_103507_2_1_10"/>
<dbReference type="OrthoDB" id="9803541at2"/>
<dbReference type="Proteomes" id="UP000008841">
    <property type="component" value="Chromosome"/>
</dbReference>
<dbReference type="GO" id="GO:0022625">
    <property type="term" value="C:cytosolic large ribosomal subunit"/>
    <property type="evidence" value="ECO:0007669"/>
    <property type="project" value="TreeGrafter"/>
</dbReference>
<dbReference type="GO" id="GO:0003735">
    <property type="term" value="F:structural constituent of ribosome"/>
    <property type="evidence" value="ECO:0007669"/>
    <property type="project" value="InterPro"/>
</dbReference>
<dbReference type="GO" id="GO:0006412">
    <property type="term" value="P:translation"/>
    <property type="evidence" value="ECO:0007669"/>
    <property type="project" value="UniProtKB-UniRule"/>
</dbReference>
<dbReference type="FunFam" id="2.30.30.790:FF:000001">
    <property type="entry name" value="50S ribosomal protein L19"/>
    <property type="match status" value="1"/>
</dbReference>
<dbReference type="Gene3D" id="2.30.30.790">
    <property type="match status" value="1"/>
</dbReference>
<dbReference type="HAMAP" id="MF_00402">
    <property type="entry name" value="Ribosomal_bL19"/>
    <property type="match status" value="1"/>
</dbReference>
<dbReference type="InterPro" id="IPR001857">
    <property type="entry name" value="Ribosomal_bL19"/>
</dbReference>
<dbReference type="InterPro" id="IPR018257">
    <property type="entry name" value="Ribosomal_bL19_CS"/>
</dbReference>
<dbReference type="InterPro" id="IPR038657">
    <property type="entry name" value="Ribosomal_bL19_sf"/>
</dbReference>
<dbReference type="InterPro" id="IPR008991">
    <property type="entry name" value="Translation_prot_SH3-like_sf"/>
</dbReference>
<dbReference type="NCBIfam" id="TIGR01024">
    <property type="entry name" value="rplS_bact"/>
    <property type="match status" value="1"/>
</dbReference>
<dbReference type="PANTHER" id="PTHR15680:SF9">
    <property type="entry name" value="LARGE RIBOSOMAL SUBUNIT PROTEIN BL19M"/>
    <property type="match status" value="1"/>
</dbReference>
<dbReference type="PANTHER" id="PTHR15680">
    <property type="entry name" value="RIBOSOMAL PROTEIN L19"/>
    <property type="match status" value="1"/>
</dbReference>
<dbReference type="Pfam" id="PF01245">
    <property type="entry name" value="Ribosomal_L19"/>
    <property type="match status" value="1"/>
</dbReference>
<dbReference type="PIRSF" id="PIRSF002191">
    <property type="entry name" value="Ribosomal_L19"/>
    <property type="match status" value="1"/>
</dbReference>
<dbReference type="PRINTS" id="PR00061">
    <property type="entry name" value="RIBOSOMALL19"/>
</dbReference>
<dbReference type="SUPFAM" id="SSF50104">
    <property type="entry name" value="Translation proteins SH3-like domain"/>
    <property type="match status" value="1"/>
</dbReference>
<dbReference type="PROSITE" id="PS01015">
    <property type="entry name" value="RIBOSOMAL_L19"/>
    <property type="match status" value="1"/>
</dbReference>
<proteinExistence type="inferred from homology"/>
<sequence length="120" mass="13332">MDQLIQLVEATQSRTDFPVINPGDTVRIQLKVIEGEKERLQAYEGVVISDRGAGASKTITVRKISHGVGVERIIPVNSPNVESVTVLKHGKARRAKLFYLRKRTGKAALKVKERKFPVKA</sequence>
<protein>
    <recommendedName>
        <fullName evidence="1">Large ribosomal subunit protein bL19</fullName>
    </recommendedName>
    <alternativeName>
        <fullName evidence="2">50S ribosomal protein L19</fullName>
    </alternativeName>
</protein>
<accession>B3ED30</accession>
<comment type="function">
    <text evidence="1">This protein is located at the 30S-50S ribosomal subunit interface and may play a role in the structure and function of the aminoacyl-tRNA binding site.</text>
</comment>
<comment type="similarity">
    <text evidence="1">Belongs to the bacterial ribosomal protein bL19 family.</text>
</comment>
<keyword id="KW-0687">Ribonucleoprotein</keyword>
<keyword id="KW-0689">Ribosomal protein</keyword>
<feature type="chain" id="PRO_1000193807" description="Large ribosomal subunit protein bL19">
    <location>
        <begin position="1"/>
        <end position="120"/>
    </location>
</feature>
<gene>
    <name evidence="1" type="primary">rplS</name>
    <name type="ordered locus">Clim_1395</name>
</gene>
<reference key="1">
    <citation type="submission" date="2008-05" db="EMBL/GenBank/DDBJ databases">
        <title>Complete sequence of Chlorobium limicola DSM 245.</title>
        <authorList>
            <consortium name="US DOE Joint Genome Institute"/>
            <person name="Lucas S."/>
            <person name="Copeland A."/>
            <person name="Lapidus A."/>
            <person name="Glavina del Rio T."/>
            <person name="Dalin E."/>
            <person name="Tice H."/>
            <person name="Bruce D."/>
            <person name="Goodwin L."/>
            <person name="Pitluck S."/>
            <person name="Schmutz J."/>
            <person name="Larimer F."/>
            <person name="Land M."/>
            <person name="Hauser L."/>
            <person name="Kyrpides N."/>
            <person name="Ovchinnikova G."/>
            <person name="Zhao F."/>
            <person name="Li T."/>
            <person name="Liu Z."/>
            <person name="Overmann J."/>
            <person name="Bryant D.A."/>
            <person name="Richardson P."/>
        </authorList>
    </citation>
    <scope>NUCLEOTIDE SEQUENCE [LARGE SCALE GENOMIC DNA]</scope>
    <source>
        <strain>DSM 245 / NBRC 103803 / 6330</strain>
    </source>
</reference>
<name>RL19_CHLL2</name>
<organism>
    <name type="scientific">Chlorobium limicola (strain DSM 245 / NBRC 103803 / 6330)</name>
    <dbReference type="NCBI Taxonomy" id="290315"/>
    <lineage>
        <taxon>Bacteria</taxon>
        <taxon>Pseudomonadati</taxon>
        <taxon>Chlorobiota</taxon>
        <taxon>Chlorobiia</taxon>
        <taxon>Chlorobiales</taxon>
        <taxon>Chlorobiaceae</taxon>
        <taxon>Chlorobium/Pelodictyon group</taxon>
        <taxon>Chlorobium</taxon>
    </lineage>
</organism>
<evidence type="ECO:0000255" key="1">
    <source>
        <dbReference type="HAMAP-Rule" id="MF_00402"/>
    </source>
</evidence>
<evidence type="ECO:0000305" key="2"/>